<keyword id="KW-0378">Hydrolase</keyword>
<keyword id="KW-0479">Metal-binding</keyword>
<keyword id="KW-0539">Nucleus</keyword>
<keyword id="KW-0904">Protein phosphatase</keyword>
<keyword id="KW-1185">Reference proteome</keyword>
<keyword id="KW-0862">Zinc</keyword>
<keyword id="KW-0863">Zinc-finger</keyword>
<proteinExistence type="inferred from homology"/>
<dbReference type="EC" id="3.1.3.16"/>
<dbReference type="EMBL" id="Z12017">
    <property type="protein sequence ID" value="CAA78048.1"/>
    <property type="molecule type" value="Genomic_DNA"/>
</dbReference>
<dbReference type="PIR" id="S41037">
    <property type="entry name" value="S24458"/>
</dbReference>
<dbReference type="RefSeq" id="NP_498983.1">
    <property type="nucleotide sequence ID" value="NM_066582.8"/>
</dbReference>
<dbReference type="SMR" id="P30641"/>
<dbReference type="BioGRID" id="41466">
    <property type="interactions" value="3"/>
</dbReference>
<dbReference type="FunCoup" id="P30641">
    <property type="interactions" value="252"/>
</dbReference>
<dbReference type="STRING" id="6239.R08D7.2.2"/>
<dbReference type="PaxDb" id="6239-R08D7.2.2"/>
<dbReference type="PeptideAtlas" id="P30641"/>
<dbReference type="EnsemblMetazoa" id="R08D7.2.1">
    <property type="protein sequence ID" value="R08D7.2.1"/>
    <property type="gene ID" value="WBGene00011143"/>
</dbReference>
<dbReference type="GeneID" id="176267"/>
<dbReference type="KEGG" id="cel:CELE_R08D7.2"/>
<dbReference type="UCSC" id="R08D7.2.1">
    <property type="organism name" value="c. elegans"/>
</dbReference>
<dbReference type="AGR" id="WB:WBGene00011143"/>
<dbReference type="CTD" id="176267"/>
<dbReference type="WormBase" id="R08D7.2">
    <property type="protein sequence ID" value="CE00290"/>
    <property type="gene ID" value="WBGene00011143"/>
    <property type="gene designation" value="rpap-2"/>
</dbReference>
<dbReference type="eggNOG" id="KOG4780">
    <property type="taxonomic scope" value="Eukaryota"/>
</dbReference>
<dbReference type="GeneTree" id="ENSGT00390000017965"/>
<dbReference type="HOGENOM" id="CLU_584284_0_0_1"/>
<dbReference type="InParanoid" id="P30641"/>
<dbReference type="OMA" id="LMDFYPS"/>
<dbReference type="OrthoDB" id="2590500at2759"/>
<dbReference type="Reactome" id="R-CEL-6807505">
    <property type="pathway name" value="RNA polymerase II transcribes snRNA genes"/>
</dbReference>
<dbReference type="PRO" id="PR:P30641"/>
<dbReference type="Proteomes" id="UP000001940">
    <property type="component" value="Chromosome III"/>
</dbReference>
<dbReference type="Bgee" id="WBGene00011143">
    <property type="expression patterns" value="Expressed in germ line (C elegans) and 4 other cell types or tissues"/>
</dbReference>
<dbReference type="GO" id="GO:0005737">
    <property type="term" value="C:cytoplasm"/>
    <property type="evidence" value="ECO:0000318"/>
    <property type="project" value="GO_Central"/>
</dbReference>
<dbReference type="GO" id="GO:0005634">
    <property type="term" value="C:nucleus"/>
    <property type="evidence" value="ECO:0000318"/>
    <property type="project" value="GO_Central"/>
</dbReference>
<dbReference type="GO" id="GO:0043175">
    <property type="term" value="F:RNA polymerase core enzyme binding"/>
    <property type="evidence" value="ECO:0007669"/>
    <property type="project" value="InterPro"/>
</dbReference>
<dbReference type="GO" id="GO:0008420">
    <property type="term" value="F:RNA polymerase II CTD heptapeptide repeat phosphatase activity"/>
    <property type="evidence" value="ECO:0000318"/>
    <property type="project" value="GO_Central"/>
</dbReference>
<dbReference type="GO" id="GO:0008270">
    <property type="term" value="F:zinc ion binding"/>
    <property type="evidence" value="ECO:0007669"/>
    <property type="project" value="UniProtKB-KW"/>
</dbReference>
<dbReference type="FunFam" id="1.25.40.820:FF:000009">
    <property type="entry name" value="Putative RNA polymerase II subunit B1 CTD phosphatase rpap-2"/>
    <property type="match status" value="1"/>
</dbReference>
<dbReference type="Gene3D" id="1.25.40.820">
    <property type="match status" value="1"/>
</dbReference>
<dbReference type="InterPro" id="IPR039693">
    <property type="entry name" value="Rtr1/RPAP2"/>
</dbReference>
<dbReference type="InterPro" id="IPR007308">
    <property type="entry name" value="Rtr1/RPAP2_dom"/>
</dbReference>
<dbReference type="InterPro" id="IPR038534">
    <property type="entry name" value="Rtr1/RPAP2_sf"/>
</dbReference>
<dbReference type="PANTHER" id="PTHR14732">
    <property type="entry name" value="RNA POLYMERASE II SUBUNIT B1 CTD PHOSPHATASE RPAP2-RELATED"/>
    <property type="match status" value="1"/>
</dbReference>
<dbReference type="PANTHER" id="PTHR14732:SF0">
    <property type="entry name" value="RNA POLYMERASE II SUBUNIT B1 CTD PHOSPHATASE RPAP2-RELATED"/>
    <property type="match status" value="1"/>
</dbReference>
<dbReference type="Pfam" id="PF04181">
    <property type="entry name" value="RPAP2_Rtr1"/>
    <property type="match status" value="1"/>
</dbReference>
<dbReference type="PROSITE" id="PS51479">
    <property type="entry name" value="ZF_RTR1"/>
    <property type="match status" value="1"/>
</dbReference>
<evidence type="ECO:0000250" key="1"/>
<evidence type="ECO:0000255" key="2">
    <source>
        <dbReference type="PROSITE-ProRule" id="PRU00812"/>
    </source>
</evidence>
<evidence type="ECO:0000305" key="3"/>
<evidence type="ECO:0000312" key="4">
    <source>
        <dbReference type="WormBase" id="R08D7.2"/>
    </source>
</evidence>
<name>RPAP2_CAEEL</name>
<organism>
    <name type="scientific">Caenorhabditis elegans</name>
    <dbReference type="NCBI Taxonomy" id="6239"/>
    <lineage>
        <taxon>Eukaryota</taxon>
        <taxon>Metazoa</taxon>
        <taxon>Ecdysozoa</taxon>
        <taxon>Nematoda</taxon>
        <taxon>Chromadorea</taxon>
        <taxon>Rhabditida</taxon>
        <taxon>Rhabditina</taxon>
        <taxon>Rhabditomorpha</taxon>
        <taxon>Rhabditoidea</taxon>
        <taxon>Rhabditidae</taxon>
        <taxon>Peloderinae</taxon>
        <taxon>Caenorhabditis</taxon>
    </lineage>
</organism>
<accession>P30641</accession>
<gene>
    <name evidence="4" type="primary">rpap-2</name>
    <name evidence="4" type="ORF">R08D7.2</name>
</gene>
<comment type="function">
    <text evidence="1">Putative RNA polymerase II subunit B1 C-terminal domain (CTD) phosphatase involved in RNA polymerase II transcription regulation.</text>
</comment>
<comment type="catalytic activity">
    <reaction>
        <text>O-phospho-L-seryl-[protein] + H2O = L-seryl-[protein] + phosphate</text>
        <dbReference type="Rhea" id="RHEA:20629"/>
        <dbReference type="Rhea" id="RHEA-COMP:9863"/>
        <dbReference type="Rhea" id="RHEA-COMP:11604"/>
        <dbReference type="ChEBI" id="CHEBI:15377"/>
        <dbReference type="ChEBI" id="CHEBI:29999"/>
        <dbReference type="ChEBI" id="CHEBI:43474"/>
        <dbReference type="ChEBI" id="CHEBI:83421"/>
        <dbReference type="EC" id="3.1.3.16"/>
    </reaction>
</comment>
<comment type="catalytic activity">
    <reaction>
        <text>O-phospho-L-threonyl-[protein] + H2O = L-threonyl-[protein] + phosphate</text>
        <dbReference type="Rhea" id="RHEA:47004"/>
        <dbReference type="Rhea" id="RHEA-COMP:11060"/>
        <dbReference type="Rhea" id="RHEA-COMP:11605"/>
        <dbReference type="ChEBI" id="CHEBI:15377"/>
        <dbReference type="ChEBI" id="CHEBI:30013"/>
        <dbReference type="ChEBI" id="CHEBI:43474"/>
        <dbReference type="ChEBI" id="CHEBI:61977"/>
        <dbReference type="EC" id="3.1.3.16"/>
    </reaction>
</comment>
<comment type="subcellular location">
    <subcellularLocation>
        <location evidence="1">Nucleus</location>
    </subcellularLocation>
</comment>
<comment type="similarity">
    <text evidence="2 3">Belongs to the RPAP2 family.</text>
</comment>
<sequence length="455" mass="52438">METEIPVNEKETSFRRRVYTTIETLIDIENTDQLQEHLPHLHCLGWDEVVEERYVNKQCGFPSCQKAPPKITRNQMFEIDRKEGKIFEFRKQRAKFCSEMCYQKSSFVRKQLDEHPLWITGLTEARTQKVYEVPDESFVSPIAEKSEPVDSQFKKEPSIWLVTDSIIAKVQDMKLSEEAEEPKSLDPEDQDIEPFKLTDDDKDFIKSIKEFRNSNFGPPSTSKLLKTAPKPVLSAKDRKKEDEVLAKLRAKYGNKNALQKKPPILIEAQEIHSKLKTMEKAKEAWLVDLIKSWFTPETRKLVREGARPTGGAAEQILMDFLSGKKVDAEKLVNLPNLDKYNVKEKRLNIFLHSIRNHWMDLEARLHLTPTRRDILSRVASTFQLDSENITGWTKREINSIVIALFIVICLVDVELGDDYFKKDNASPELTAISNELCGLDSFQITGLHAAIKSQC</sequence>
<feature type="chain" id="PRO_0000065430" description="Putative RNA polymerase II subunit B1 CTD phosphatase rpap-2">
    <location>
        <begin position="1"/>
        <end position="455"/>
    </location>
</feature>
<feature type="zinc finger region" description="RTR1-type" evidence="2">
    <location>
        <begin position="36"/>
        <end position="121"/>
    </location>
</feature>
<feature type="binding site" evidence="2">
    <location>
        <position position="59"/>
    </location>
    <ligand>
        <name>Zn(2+)</name>
        <dbReference type="ChEBI" id="CHEBI:29105"/>
    </ligand>
</feature>
<feature type="binding site" evidence="2">
    <location>
        <position position="64"/>
    </location>
    <ligand>
        <name>Zn(2+)</name>
        <dbReference type="ChEBI" id="CHEBI:29105"/>
    </ligand>
</feature>
<feature type="binding site" evidence="2">
    <location>
        <position position="97"/>
    </location>
    <ligand>
        <name>Zn(2+)</name>
        <dbReference type="ChEBI" id="CHEBI:29105"/>
    </ligand>
</feature>
<feature type="binding site" evidence="2">
    <location>
        <position position="101"/>
    </location>
    <ligand>
        <name>Zn(2+)</name>
        <dbReference type="ChEBI" id="CHEBI:29105"/>
    </ligand>
</feature>
<protein>
    <recommendedName>
        <fullName>Putative RNA polymerase II subunit B1 CTD phosphatase rpap-2</fullName>
        <ecNumber>3.1.3.16</ecNumber>
    </recommendedName>
    <alternativeName>
        <fullName>RNA polymerase II-associated protein 2</fullName>
    </alternativeName>
</protein>
<reference key="1">
    <citation type="journal article" date="1994" name="Nature">
        <title>2.2 Mb of contiguous nucleotide sequence from chromosome III of C. elegans.</title>
        <authorList>
            <person name="Wilson R."/>
            <person name="Ainscough R."/>
            <person name="Anderson K."/>
            <person name="Baynes C."/>
            <person name="Berks M."/>
            <person name="Bonfield J."/>
            <person name="Burton J."/>
            <person name="Connell M."/>
            <person name="Copsey T."/>
            <person name="Cooper J."/>
            <person name="Coulson A."/>
            <person name="Craxton M."/>
            <person name="Dear S."/>
            <person name="Du Z."/>
            <person name="Durbin R."/>
            <person name="Favello A."/>
            <person name="Fraser A."/>
            <person name="Fulton L."/>
            <person name="Gardner A."/>
            <person name="Green P."/>
            <person name="Hawkins T."/>
            <person name="Hillier L."/>
            <person name="Jier M."/>
            <person name="Johnston L."/>
            <person name="Jones M."/>
            <person name="Kershaw J."/>
            <person name="Kirsten J."/>
            <person name="Laisster N."/>
            <person name="Latreille P."/>
            <person name="Lightning J."/>
            <person name="Lloyd C."/>
            <person name="Mortimore B."/>
            <person name="O'Callaghan M."/>
            <person name="Parsons J."/>
            <person name="Percy C."/>
            <person name="Rifken L."/>
            <person name="Roopra A."/>
            <person name="Saunders D."/>
            <person name="Shownkeen R."/>
            <person name="Sims M."/>
            <person name="Smaldon N."/>
            <person name="Smith A."/>
            <person name="Smith M."/>
            <person name="Sonnhammer E."/>
            <person name="Staden R."/>
            <person name="Sulston J."/>
            <person name="Thierry-Mieg J."/>
            <person name="Thomas K."/>
            <person name="Vaudin M."/>
            <person name="Vaughan K."/>
            <person name="Waterston R."/>
            <person name="Watson A."/>
            <person name="Weinstock L."/>
            <person name="Wilkinson-Sproat J."/>
            <person name="Wohldman P."/>
        </authorList>
    </citation>
    <scope>NUCLEOTIDE SEQUENCE [LARGE SCALE GENOMIC DNA]</scope>
    <source>
        <strain>Bristol N2</strain>
    </source>
</reference>
<reference key="2">
    <citation type="journal article" date="1998" name="Science">
        <title>Genome sequence of the nematode C. elegans: a platform for investigating biology.</title>
        <authorList>
            <consortium name="The C. elegans sequencing consortium"/>
        </authorList>
    </citation>
    <scope>NUCLEOTIDE SEQUENCE [LARGE SCALE GENOMIC DNA]</scope>
    <source>
        <strain>Bristol N2</strain>
    </source>
</reference>